<evidence type="ECO:0000250" key="1">
    <source>
        <dbReference type="UniProtKB" id="P04746"/>
    </source>
</evidence>
<evidence type="ECO:0000250" key="2">
    <source>
        <dbReference type="UniProtKB" id="P56634"/>
    </source>
</evidence>
<evidence type="ECO:0000255" key="3"/>
<evidence type="ECO:0000255" key="4">
    <source>
        <dbReference type="RuleBase" id="RU003615"/>
    </source>
</evidence>
<evidence type="ECO:0000255" key="5">
    <source>
        <dbReference type="RuleBase" id="RU361134"/>
    </source>
</evidence>
<evidence type="ECO:0000269" key="6">
    <source>
    </source>
</evidence>
<evidence type="ECO:0000303" key="7">
    <source>
    </source>
</evidence>
<evidence type="ECO:0000305" key="8"/>
<evidence type="ECO:0000305" key="9">
    <source>
    </source>
</evidence>
<evidence type="ECO:0000312" key="10">
    <source>
        <dbReference type="EMBL" id="ABL09312.1"/>
    </source>
</evidence>
<reference evidence="10" key="1">
    <citation type="submission" date="2006-08" db="EMBL/GenBank/DDBJ databases">
        <title>Isolation and characterization of group 4 allergen from Acarus siro.</title>
        <authorList>
            <person name="Tan C.L."/>
            <person name="Chew F.T."/>
        </authorList>
    </citation>
    <scope>NUCLEOTIDE SEQUENCE [MRNA]</scope>
</reference>
<reference key="2">
    <citation type="journal article" date="2012" name="BMC Biochem.">
        <title>Enzymatic activity and immunoreactivity of Aca s 4, an alpha-amylase allergen from the storage mite Acarus siro.</title>
        <authorList>
            <person name="Pytelkova J."/>
            <person name="Lepsik M."/>
            <person name="Sanda M."/>
            <person name="Talacko P."/>
            <person name="Maresova L."/>
            <person name="Mares M."/>
        </authorList>
    </citation>
    <scope>PROTEIN SEQUENCE OF 22-34; 35-44; 60-90; 170-178; 221-263; 273-280; 322-337; 356-364; 444-458 AND 502-515</scope>
    <scope>IDENTIFICATION BY MASS SPECTROMETRY</scope>
    <scope>3D-STRUCTURE MODELING</scope>
    <scope>CATALYTIC ACTIVITY</scope>
    <scope>ACTIVITY REGULATION</scope>
    <scope>BIOPHYSICOCHEMICAL PROPERTIES</scope>
    <scope>ALLERGEN</scope>
</reference>
<feature type="signal peptide" evidence="3 6">
    <location>
        <begin position="1"/>
        <end position="21"/>
    </location>
</feature>
<feature type="chain" id="PRO_5002751170" description="Alpha-amylase" evidence="3 9">
    <location>
        <begin position="22"/>
        <end position="517"/>
    </location>
</feature>
<feature type="active site" description="Nucleophile" evidence="2">
    <location>
        <position position="217"/>
    </location>
</feature>
<feature type="active site" description="Proton donor" evidence="2">
    <location>
        <position position="253"/>
    </location>
</feature>
<feature type="binding site" evidence="2">
    <location>
        <position position="122"/>
    </location>
    <ligand>
        <name>Ca(2+)</name>
        <dbReference type="ChEBI" id="CHEBI:29108"/>
    </ligand>
</feature>
<feature type="binding site" evidence="2">
    <location>
        <position position="178"/>
    </location>
    <ligand>
        <name>Ca(2+)</name>
        <dbReference type="ChEBI" id="CHEBI:29108"/>
    </ligand>
</feature>
<feature type="binding site" evidence="2">
    <location>
        <position position="187"/>
    </location>
    <ligand>
        <name>Ca(2+)</name>
        <dbReference type="ChEBI" id="CHEBI:29108"/>
    </ligand>
</feature>
<feature type="binding site" evidence="2">
    <location>
        <position position="215"/>
    </location>
    <ligand>
        <name>chloride</name>
        <dbReference type="ChEBI" id="CHEBI:17996"/>
    </ligand>
</feature>
<feature type="binding site" evidence="2">
    <location>
        <position position="221"/>
    </location>
    <ligand>
        <name>Ca(2+)</name>
        <dbReference type="ChEBI" id="CHEBI:29108"/>
    </ligand>
</feature>
<feature type="binding site" evidence="2">
    <location>
        <position position="355"/>
    </location>
    <ligand>
        <name>chloride</name>
        <dbReference type="ChEBI" id="CHEBI:17996"/>
    </ligand>
</feature>
<feature type="site" description="Transition state stabilizer" evidence="1">
    <location>
        <position position="318"/>
    </location>
</feature>
<feature type="disulfide bond" evidence="2">
    <location>
        <begin position="52"/>
        <end position="108"/>
    </location>
</feature>
<feature type="disulfide bond" evidence="2">
    <location>
        <begin position="397"/>
        <end position="403"/>
    </location>
</feature>
<feature type="disulfide bond" evidence="2">
    <location>
        <begin position="470"/>
        <end position="482"/>
    </location>
</feature>
<keyword id="KW-0020">Allergen</keyword>
<keyword id="KW-0106">Calcium</keyword>
<keyword id="KW-0119">Carbohydrate metabolism</keyword>
<keyword id="KW-0868">Chloride</keyword>
<keyword id="KW-0903">Direct protein sequencing</keyword>
<keyword id="KW-1015">Disulfide bond</keyword>
<keyword id="KW-0326">Glycosidase</keyword>
<keyword id="KW-0378">Hydrolase</keyword>
<keyword id="KW-0479">Metal-binding</keyword>
<keyword id="KW-0964">Secreted</keyword>
<keyword id="KW-0732">Signal</keyword>
<protein>
    <recommendedName>
        <fullName evidence="3 5 7">Alpha-amylase</fullName>
        <ecNumber evidence="3 5 6">3.2.1.1</ecNumber>
    </recommendedName>
    <alternativeName>
        <fullName evidence="8">1,4-alpha-D-glucan glucanohydrolase</fullName>
    </alternativeName>
    <allergenName evidence="7">Aca s 4</allergenName>
</protein>
<comment type="catalytic activity">
    <reaction evidence="5 6">
        <text>Endohydrolysis of (1-&gt;4)-alpha-D-glucosidic linkages in polysaccharides containing three or more (1-&gt;4)-alpha-linked D-glucose units.</text>
        <dbReference type="EC" id="3.2.1.1"/>
    </reaction>
</comment>
<comment type="cofactor">
    <cofactor evidence="2">
        <name>Ca(2+)</name>
        <dbReference type="ChEBI" id="CHEBI:29108"/>
    </cofactor>
    <text evidence="2">Binds 1 Ca(2+) ion per subunit.</text>
</comment>
<comment type="cofactor">
    <cofactor evidence="2">
        <name>chloride</name>
        <dbReference type="ChEBI" id="CHEBI:17996"/>
    </cofactor>
    <text evidence="2">Binds 1 Cl(-) ion per subunit.</text>
</comment>
<comment type="activity regulation">
    <text evidence="6">Activated by chloride ions. Inhibited by acarbose. Not inhibited by wheat alpha-amylase inhibitors 1 (WI-1, the tetrameric form) or 3 (WI-3, the monomeric form) and bean alpha-amylase inhibitor 1 (alphaAI-1).</text>
</comment>
<comment type="biophysicochemical properties">
    <phDependence>
        <text evidence="6">Optimum pH is 6.5. Active in slightly acidic to neutral pH range.</text>
    </phDependence>
</comment>
<comment type="subunit">
    <text evidence="2">Monomer.</text>
</comment>
<comment type="subcellular location">
    <subcellularLocation>
        <location evidence="9">Secreted</location>
    </subcellularLocation>
</comment>
<comment type="allergen">
    <text evidence="6">Causes an allergic reaction in human. Binds to IgE of patients allergic to house dust mite.</text>
</comment>
<comment type="similarity">
    <text evidence="4 8">Belongs to the glycosyl hydrolase 13 family.</text>
</comment>
<dbReference type="EC" id="3.2.1.1" evidence="3 5 6"/>
<dbReference type="EMBL" id="DQ979807">
    <property type="protein sequence ID" value="ABL09312.1"/>
    <property type="molecule type" value="mRNA"/>
</dbReference>
<dbReference type="SMR" id="B0KZK1"/>
<dbReference type="BindingDB" id="B0KZK1"/>
<dbReference type="Allergome" id="9894">
    <property type="allergen name" value="Aca s 4"/>
</dbReference>
<dbReference type="CAZy" id="GH13">
    <property type="family name" value="Glycoside Hydrolase Family 13"/>
</dbReference>
<dbReference type="GO" id="GO:0005576">
    <property type="term" value="C:extracellular region"/>
    <property type="evidence" value="ECO:0007669"/>
    <property type="project" value="UniProtKB-SubCell"/>
</dbReference>
<dbReference type="GO" id="GO:0004556">
    <property type="term" value="F:alpha-amylase activity"/>
    <property type="evidence" value="ECO:0000314"/>
    <property type="project" value="UniProtKB"/>
</dbReference>
<dbReference type="GO" id="GO:0005509">
    <property type="term" value="F:calcium ion binding"/>
    <property type="evidence" value="ECO:0000250"/>
    <property type="project" value="UniProtKB"/>
</dbReference>
<dbReference type="GO" id="GO:0031404">
    <property type="term" value="F:chloride ion binding"/>
    <property type="evidence" value="ECO:0000250"/>
    <property type="project" value="UniProtKB"/>
</dbReference>
<dbReference type="GO" id="GO:0005975">
    <property type="term" value="P:carbohydrate metabolic process"/>
    <property type="evidence" value="ECO:0007669"/>
    <property type="project" value="InterPro"/>
</dbReference>
<dbReference type="CDD" id="cd11317">
    <property type="entry name" value="AmyAc_bac_euk_AmyA"/>
    <property type="match status" value="1"/>
</dbReference>
<dbReference type="Gene3D" id="3.20.20.80">
    <property type="entry name" value="Glycosidases"/>
    <property type="match status" value="1"/>
</dbReference>
<dbReference type="Gene3D" id="2.60.40.1180">
    <property type="entry name" value="Golgi alpha-mannosidase II"/>
    <property type="match status" value="1"/>
</dbReference>
<dbReference type="InterPro" id="IPR006048">
    <property type="entry name" value="A-amylase/branching_C"/>
</dbReference>
<dbReference type="InterPro" id="IPR031319">
    <property type="entry name" value="A-amylase_C"/>
</dbReference>
<dbReference type="InterPro" id="IPR006046">
    <property type="entry name" value="Alpha_amylase"/>
</dbReference>
<dbReference type="InterPro" id="IPR006047">
    <property type="entry name" value="Glyco_hydro_13_cat_dom"/>
</dbReference>
<dbReference type="InterPro" id="IPR013780">
    <property type="entry name" value="Glyco_hydro_b"/>
</dbReference>
<dbReference type="InterPro" id="IPR017853">
    <property type="entry name" value="Glycoside_hydrolase_SF"/>
</dbReference>
<dbReference type="PANTHER" id="PTHR43447">
    <property type="entry name" value="ALPHA-AMYLASE"/>
    <property type="match status" value="1"/>
</dbReference>
<dbReference type="Pfam" id="PF00128">
    <property type="entry name" value="Alpha-amylase"/>
    <property type="match status" value="1"/>
</dbReference>
<dbReference type="Pfam" id="PF02806">
    <property type="entry name" value="Alpha-amylase_C"/>
    <property type="match status" value="1"/>
</dbReference>
<dbReference type="PRINTS" id="PR00110">
    <property type="entry name" value="ALPHAAMYLASE"/>
</dbReference>
<dbReference type="SMART" id="SM00642">
    <property type="entry name" value="Aamy"/>
    <property type="match status" value="1"/>
</dbReference>
<dbReference type="SMART" id="SM00632">
    <property type="entry name" value="Aamy_C"/>
    <property type="match status" value="1"/>
</dbReference>
<dbReference type="SUPFAM" id="SSF51445">
    <property type="entry name" value="(Trans)glycosidases"/>
    <property type="match status" value="1"/>
</dbReference>
<dbReference type="SUPFAM" id="SSF51011">
    <property type="entry name" value="Glycosyl hydrolase domain"/>
    <property type="match status" value="1"/>
</dbReference>
<accession>B0KZK1</accession>
<proteinExistence type="evidence at protein level"/>
<organism evidence="10">
    <name type="scientific">Acarus siro</name>
    <name type="common">Flour mite</name>
    <name type="synonym">Tyroglyphus farinae</name>
    <dbReference type="NCBI Taxonomy" id="66546"/>
    <lineage>
        <taxon>Eukaryota</taxon>
        <taxon>Metazoa</taxon>
        <taxon>Ecdysozoa</taxon>
        <taxon>Arthropoda</taxon>
        <taxon>Chelicerata</taxon>
        <taxon>Arachnida</taxon>
        <taxon>Acari</taxon>
        <taxon>Acariformes</taxon>
        <taxon>Sarcoptiformes</taxon>
        <taxon>Astigmata</taxon>
        <taxon>Acaroidea</taxon>
        <taxon>Acaridae</taxon>
        <taxon>Acarinae</taxon>
        <taxon>Acarus</taxon>
    </lineage>
</organism>
<sequence length="517" mass="58092">MAHLLLAVVAITLALSQSVFGGSPYSNPHFTGSRSVITHLMQWKFDDIAAECERFLGPKGYGGIQLSPVNEHAVLGNRPWYELYQPVGYKIQSRSGNEEQFKGMVQRCNKVGVRIYVDIVMNHMSGAQEGHGNCWFKLQWHHDVSRCSLLVPNDFHGRESCHTDNMDIKNYDNPEEARNCRLSGLRDLKQSSEYVRQKQADFLNHLIDLGVAGSRSDASKHMWPGDLEAIYGKLHNLNTAYFPANSRPFIYHEVIYYGGDGIKSSDYTKLGRAIEFHFYRDIANVVRRHNQLKTVKNFGQPWGMVPSDDALVMVDSHDLQRFHTGQVGVNINYFESRLLKVATAFMLAWPYGVPRVMSSYHWDQKIEDGKDKNDWIGPPSDGSGNILSVTPQPDDTCNKEWICEHRWRQIYNMVHFRNVAGNEAVSHWWDNGDYQIAFGRGSKAFIAINLQDGQGLNRKLATGLPQGTYCDLVTGNLAGGKCTGGTVTVDGSGNADINIAKTAEDPFVAIHVEAKLH</sequence>
<name>AMY_ACASI</name>